<comment type="function">
    <molecule>Frenatin 4.1</molecule>
    <text evidence="3">Peptide with unknown function (PubMed:27792198). Does not show antimicrobial activity against S.aureus (MIC&gt;512 ug/mL), E.coli (MIC&gt;512 ug/mL) and C.albicans (MIC&gt;512 ug/mL) (PubMed:27792198). Does not show hemolytic activity (PubMed:27792198).</text>
</comment>
<comment type="function">
    <molecule>Frenatin 4.2</molecule>
    <text evidence="3">Antimicrobial peptide with activity against E.coli (MIC=128 ug/mL or 54 uM) and C.albicans (MIC=256 ug/mL or 108 uM) (PubMed:27792198). Does not show activity against S.aureus (MIC&gt;512 ug/mL) (PubMed:27792198). Does not show hemolytic activity (PubMed:27792198).</text>
</comment>
<comment type="subcellular location">
    <molecule>Frenatin 4.1</molecule>
    <subcellularLocation>
        <location evidence="2 3">Secreted</location>
    </subcellularLocation>
    <subcellularLocation>
        <location evidence="5">Target cell membrane</location>
    </subcellularLocation>
    <text evidence="6">Forms typical alpha-helical structure in membrane.</text>
</comment>
<comment type="subcellular location">
    <molecule>Frenatin 4.2</molecule>
    <subcellularLocation>
        <location evidence="3">Secreted</location>
    </subcellularLocation>
    <subcellularLocation>
        <location evidence="5">Target cell membrane</location>
    </subcellularLocation>
    <text evidence="6">Forms typical alpha-helical structure in membrane.</text>
</comment>
<comment type="tissue specificity">
    <text evidence="6">Expressed by the skin glands.</text>
</comment>
<comment type="mass spectrometry"/>
<comment type="miscellaneous">
    <text evidence="6">Frenatin 4.1a is a mutant of frenatin 4.1, it has the same peptide length and is non-amidated. Frenatin 4.2a is a mutant of frenatin 4.2, it has the same peptide length and is amidated.</text>
</comment>
<comment type="similarity">
    <text evidence="5">Belongs to the frog skin active peptide (FSAP) family. Frenatin subfamily.</text>
</comment>
<feature type="signal peptide" evidence="1">
    <location>
        <begin position="1"/>
        <end position="22"/>
    </location>
</feature>
<feature type="propeptide" id="PRO_0000450240" evidence="6">
    <location>
        <begin position="23"/>
        <end position="46"/>
    </location>
</feature>
<feature type="peptide" id="PRO_5004250674" description="Frenatin 4.1" evidence="3">
    <location>
        <begin position="47"/>
        <end position="70"/>
    </location>
</feature>
<feature type="peptide" id="PRO_0000450241" description="Frenatin 4.2" evidence="3">
    <location>
        <begin position="47"/>
        <end position="68"/>
    </location>
</feature>
<feature type="modified residue" description="Lysine amide" evidence="3">
    <location>
        <position position="68"/>
    </location>
</feature>
<feature type="mutagenesis site" description="In frenatin 4.2a; important increase in activity against the Gram-positive bacterium S.aureus (gain of activity), the Gram-negative bacterium E.coli (4-fold) and the fungus C.albicans (16-fold), and gain of hemolytic activity; when associated with L-58." evidence="3">
    <original>E</original>
    <variation>L</variation>
    <location>
        <position position="50"/>
    </location>
</feature>
<feature type="mutagenesis site" description="In frenatin 4.1a; increase in activity against the Gram-negative bacterium E.coli (4-fold) and the fungus C.albicans (2-fold), and no change in hemolytic activity; when associated with L-63." evidence="3">
    <original>T</original>
    <variation>K</variation>
    <location>
        <position position="54"/>
    </location>
</feature>
<feature type="mutagenesis site" description="In frenatin 4.2a; important increase in activity against the Gram-positive bacterium S.aureus (gain of activity), the Gram-negative bacterium E.coli (4-fold) and the fungus C.albicans (16-fold), and gain of hemolytic activity; when associated with L-50." evidence="3">
    <original>D</original>
    <variation>L</variation>
    <location>
        <position position="58"/>
    </location>
</feature>
<feature type="mutagenesis site" description="In frenatin 4.1a; increase in activity against the Gram-negative bacterium E.coli (4-fold) and the fungus C.albicans (2-fold), and no change in hemolytic activity; when associated with K-54." evidence="3">
    <original>F</original>
    <variation>L</variation>
    <location>
        <position position="63"/>
    </location>
</feature>
<keyword id="KW-0027">Amidation</keyword>
<keyword id="KW-0878">Amphibian defense peptide</keyword>
<keyword id="KW-0044">Antibiotic</keyword>
<keyword id="KW-0929">Antimicrobial</keyword>
<keyword id="KW-0165">Cleavage on pair of basic residues</keyword>
<keyword id="KW-0903">Direct protein sequencing</keyword>
<keyword id="KW-0391">Immunity</keyword>
<keyword id="KW-0399">Innate immunity</keyword>
<keyword id="KW-0472">Membrane</keyword>
<keyword id="KW-0964">Secreted</keyword>
<keyword id="KW-0732">Signal</keyword>
<keyword id="KW-1052">Target cell membrane</keyword>
<keyword id="KW-1053">Target membrane</keyword>
<protein>
    <recommendedName>
        <fullName evidence="4">Frenatin 4.1</fullName>
    </recommendedName>
    <component>
        <recommendedName>
            <fullName evidence="4">Frenatin 4.2</fullName>
        </recommendedName>
    </component>
</protein>
<name>FRE41_NYCIN</name>
<accession>Q571V3</accession>
<sequence>MAFLKKSLFLVLFLGLVNLSICEEEKREEENKEEEDENEALSEVKRGFLEKLKTGAKDFASAFVNSIKGT</sequence>
<dbReference type="EMBL" id="AJ937526">
    <property type="protein sequence ID" value="CAI77675.1"/>
    <property type="molecule type" value="mRNA"/>
</dbReference>
<dbReference type="GO" id="GO:0005576">
    <property type="term" value="C:extracellular region"/>
    <property type="evidence" value="ECO:0007669"/>
    <property type="project" value="UniProtKB-SubCell"/>
</dbReference>
<dbReference type="GO" id="GO:0016020">
    <property type="term" value="C:membrane"/>
    <property type="evidence" value="ECO:0007669"/>
    <property type="project" value="UniProtKB-KW"/>
</dbReference>
<dbReference type="GO" id="GO:0044218">
    <property type="term" value="C:other organism cell membrane"/>
    <property type="evidence" value="ECO:0007669"/>
    <property type="project" value="UniProtKB-KW"/>
</dbReference>
<dbReference type="GO" id="GO:0042742">
    <property type="term" value="P:defense response to bacterium"/>
    <property type="evidence" value="ECO:0007669"/>
    <property type="project" value="UniProtKB-KW"/>
</dbReference>
<dbReference type="GO" id="GO:0045087">
    <property type="term" value="P:innate immune response"/>
    <property type="evidence" value="ECO:0007669"/>
    <property type="project" value="UniProtKB-KW"/>
</dbReference>
<dbReference type="InterPro" id="IPR004275">
    <property type="entry name" value="Frog_antimicrobial_propeptide"/>
</dbReference>
<dbReference type="InterPro" id="IPR016322">
    <property type="entry name" value="FSAP"/>
</dbReference>
<dbReference type="Pfam" id="PF03032">
    <property type="entry name" value="FSAP_sig_propep"/>
    <property type="match status" value="1"/>
</dbReference>
<dbReference type="PIRSF" id="PIRSF001822">
    <property type="entry name" value="Dermaseptin_precursor"/>
    <property type="match status" value="1"/>
</dbReference>
<evidence type="ECO:0000255" key="1"/>
<evidence type="ECO:0000269" key="2">
    <source>
    </source>
</evidence>
<evidence type="ECO:0000269" key="3">
    <source>
    </source>
</evidence>
<evidence type="ECO:0000303" key="4">
    <source>
    </source>
</evidence>
<evidence type="ECO:0000305" key="5"/>
<evidence type="ECO:0000305" key="6">
    <source>
    </source>
</evidence>
<reference key="1">
    <citation type="journal article" date="2005" name="Peptides">
        <title>Novel frenatins from the skin of the Australasian giant white-lipped tree frog, Litoria infrafrenata: cloning of precursor cDNAs and identification in defensive skin secretion.</title>
        <authorList>
            <person name="Zhou M."/>
            <person name="Chen T."/>
            <person name="Walker B."/>
            <person name="Shaw C."/>
        </authorList>
    </citation>
    <scope>NUCLEOTIDE SEQUENCE [MRNA]</scope>
    <scope>PROTEIN SEQUENCE OF 47-70</scope>
    <scope>MASS SPECTROMETRY</scope>
    <scope>SUBCELLULAR LOCATION</scope>
    <source>
        <tissue>Skin</tissue>
    </source>
</reference>
<reference key="2">
    <citation type="journal article" date="2016" name="Molecules">
        <title>A combined molecular cloning and mass spectrometric method to identify, characterize, and design frenatin peptides from the skin secretion of Litoria infrafrenata.</title>
        <authorList>
            <person name="Wu D."/>
            <person name="Gao Y."/>
            <person name="Wang L."/>
            <person name="Xi X."/>
            <person name="Wu Y."/>
            <person name="Zhou M."/>
            <person name="Zhang Y."/>
            <person name="Ma C."/>
            <person name="Chen T."/>
            <person name="Shaw C."/>
        </authorList>
    </citation>
    <scope>NUCLEOTIDE SEQUENCE [MRNA]</scope>
    <scope>PROTEIN SEQUENCE OF 47-68 AND 47-70</scope>
    <scope>FUNCTION</scope>
    <scope>AMIDATION AT LYS-68</scope>
    <scope>SUBCELLULAR LOCATION</scope>
    <scope>SYNTHESIS OF 47-68 AND 47-70</scope>
    <scope>MUTAGENESIS OF GLU-50; THR-54; ASP-58 AND PHE-63</scope>
    <source>
        <tissue>Skin secretion</tissue>
    </source>
</reference>
<organism>
    <name type="scientific">Nyctimystes infrafrenatus</name>
    <name type="common">White-lipped tree frog</name>
    <name type="synonym">Litoria infrafrenata</name>
    <dbReference type="NCBI Taxonomy" id="61195"/>
    <lineage>
        <taxon>Eukaryota</taxon>
        <taxon>Metazoa</taxon>
        <taxon>Chordata</taxon>
        <taxon>Craniata</taxon>
        <taxon>Vertebrata</taxon>
        <taxon>Euteleostomi</taxon>
        <taxon>Amphibia</taxon>
        <taxon>Batrachia</taxon>
        <taxon>Anura</taxon>
        <taxon>Neobatrachia</taxon>
        <taxon>Hyloidea</taxon>
        <taxon>Hylidae</taxon>
        <taxon>Pelodryadinae</taxon>
        <taxon>Nyctimystes</taxon>
    </lineage>
</organism>
<proteinExistence type="evidence at protein level"/>